<evidence type="ECO:0000255" key="1">
    <source>
        <dbReference type="HAMAP-Rule" id="MF_00040"/>
    </source>
</evidence>
<keyword id="KW-0963">Cytoplasm</keyword>
<keyword id="KW-0648">Protein biosynthesis</keyword>
<proteinExistence type="inferred from homology"/>
<dbReference type="EMBL" id="CP001184">
    <property type="protein sequence ID" value="ACI60070.1"/>
    <property type="molecule type" value="Genomic_DNA"/>
</dbReference>
<dbReference type="RefSeq" id="WP_012560274.1">
    <property type="nucleotide sequence ID" value="NC_011374.1"/>
</dbReference>
<dbReference type="SMR" id="B5ZC20"/>
<dbReference type="STRING" id="565575.UUR10_0595"/>
<dbReference type="KEGG" id="uue:UUR10_0595"/>
<dbReference type="eggNOG" id="COG0233">
    <property type="taxonomic scope" value="Bacteria"/>
</dbReference>
<dbReference type="HOGENOM" id="CLU_073981_2_0_14"/>
<dbReference type="OrthoDB" id="9804006at2"/>
<dbReference type="Proteomes" id="UP000002018">
    <property type="component" value="Chromosome"/>
</dbReference>
<dbReference type="GO" id="GO:0005737">
    <property type="term" value="C:cytoplasm"/>
    <property type="evidence" value="ECO:0007669"/>
    <property type="project" value="UniProtKB-SubCell"/>
</dbReference>
<dbReference type="GO" id="GO:0043023">
    <property type="term" value="F:ribosomal large subunit binding"/>
    <property type="evidence" value="ECO:0007669"/>
    <property type="project" value="TreeGrafter"/>
</dbReference>
<dbReference type="GO" id="GO:0006415">
    <property type="term" value="P:translational termination"/>
    <property type="evidence" value="ECO:0007669"/>
    <property type="project" value="UniProtKB-UniRule"/>
</dbReference>
<dbReference type="CDD" id="cd00520">
    <property type="entry name" value="RRF"/>
    <property type="match status" value="1"/>
</dbReference>
<dbReference type="FunFam" id="3.30.1360.40:FF:000001">
    <property type="entry name" value="Ribosome-recycling factor"/>
    <property type="match status" value="1"/>
</dbReference>
<dbReference type="Gene3D" id="3.30.1360.40">
    <property type="match status" value="1"/>
</dbReference>
<dbReference type="Gene3D" id="1.10.132.20">
    <property type="entry name" value="Ribosome-recycling factor"/>
    <property type="match status" value="1"/>
</dbReference>
<dbReference type="HAMAP" id="MF_00040">
    <property type="entry name" value="RRF"/>
    <property type="match status" value="1"/>
</dbReference>
<dbReference type="InterPro" id="IPR002661">
    <property type="entry name" value="Ribosome_recyc_fac"/>
</dbReference>
<dbReference type="InterPro" id="IPR023584">
    <property type="entry name" value="Ribosome_recyc_fac_dom"/>
</dbReference>
<dbReference type="InterPro" id="IPR036191">
    <property type="entry name" value="RRF_sf"/>
</dbReference>
<dbReference type="NCBIfam" id="TIGR00496">
    <property type="entry name" value="frr"/>
    <property type="match status" value="1"/>
</dbReference>
<dbReference type="PANTHER" id="PTHR20982:SF3">
    <property type="entry name" value="MITOCHONDRIAL RIBOSOME RECYCLING FACTOR PSEUDO 1"/>
    <property type="match status" value="1"/>
</dbReference>
<dbReference type="PANTHER" id="PTHR20982">
    <property type="entry name" value="RIBOSOME RECYCLING FACTOR"/>
    <property type="match status" value="1"/>
</dbReference>
<dbReference type="Pfam" id="PF01765">
    <property type="entry name" value="RRF"/>
    <property type="match status" value="1"/>
</dbReference>
<dbReference type="SUPFAM" id="SSF55194">
    <property type="entry name" value="Ribosome recycling factor, RRF"/>
    <property type="match status" value="1"/>
</dbReference>
<accession>B5ZC20</accession>
<reference key="1">
    <citation type="submission" date="2008-10" db="EMBL/GenBank/DDBJ databases">
        <title>Genome sequence of Ureaplasma urealyticum serovar 10 ATCC-33699.</title>
        <authorList>
            <person name="Shrivastava S."/>
            <person name="Methe B.A."/>
            <person name="Glass J."/>
            <person name="White K."/>
            <person name="Duffy L.B."/>
        </authorList>
    </citation>
    <scope>NUCLEOTIDE SEQUENCE [LARGE SCALE GENOMIC DNA]</scope>
    <source>
        <strain>ATCC 33699 / Western</strain>
    </source>
</reference>
<comment type="function">
    <text evidence="1">Responsible for the release of ribosomes from messenger RNA at the termination of protein biosynthesis. May increase the efficiency of translation by recycling ribosomes from one round of translation to another.</text>
</comment>
<comment type="subcellular location">
    <subcellularLocation>
        <location evidence="1">Cytoplasm</location>
    </subcellularLocation>
</comment>
<comment type="similarity">
    <text evidence="1">Belongs to the RRF family.</text>
</comment>
<feature type="chain" id="PRO_1000090800" description="Ribosome-recycling factor">
    <location>
        <begin position="1"/>
        <end position="183"/>
    </location>
</feature>
<organism>
    <name type="scientific">Ureaplasma urealyticum serovar 10 (strain ATCC 33699 / Western)</name>
    <dbReference type="NCBI Taxonomy" id="565575"/>
    <lineage>
        <taxon>Bacteria</taxon>
        <taxon>Bacillati</taxon>
        <taxon>Mycoplasmatota</taxon>
        <taxon>Mycoplasmoidales</taxon>
        <taxon>Mycoplasmoidaceae</taxon>
        <taxon>Ureaplasma</taxon>
    </lineage>
</organism>
<name>RRF_UREU1</name>
<protein>
    <recommendedName>
        <fullName evidence="1">Ribosome-recycling factor</fullName>
        <shortName evidence="1">RRF</shortName>
    </recommendedName>
    <alternativeName>
        <fullName evidence="1">Ribosome-releasing factor</fullName>
    </alternativeName>
</protein>
<gene>
    <name evidence="1" type="primary">frr</name>
    <name type="ordered locus">UUR10_0595</name>
</gene>
<sequence>MNFKIYETKIREEFELVLKWMHNEFIKLRTGRATPAILDGILVDYYGSMTPINQLANISVPEPRVLAIKPYDRSSIKDVASAINASNLGVNPQVDVDIIRLTFAAPTEEVRKNLAKKAKQVGEEAKIRVRHIRQEAQDLFKKNSSTVEDDKKFFQTELDNLTKELNKEIEAVVSHKEKDIMTV</sequence>